<evidence type="ECO:0000250" key="1"/>
<evidence type="ECO:0000250" key="2">
    <source>
        <dbReference type="UniProtKB" id="P78310"/>
    </source>
</evidence>
<evidence type="ECO:0000250" key="3">
    <source>
        <dbReference type="UniProtKB" id="P97792"/>
    </source>
</evidence>
<evidence type="ECO:0000255" key="4"/>
<evidence type="ECO:0000255" key="5">
    <source>
        <dbReference type="PROSITE-ProRule" id="PRU00114"/>
    </source>
</evidence>
<evidence type="ECO:0000256" key="6">
    <source>
        <dbReference type="SAM" id="MobiDB-lite"/>
    </source>
</evidence>
<keyword id="KW-0130">Cell adhesion</keyword>
<keyword id="KW-0965">Cell junction</keyword>
<keyword id="KW-1003">Cell membrane</keyword>
<keyword id="KW-1015">Disulfide bond</keyword>
<keyword id="KW-0325">Glycoprotein</keyword>
<keyword id="KW-0393">Immunoglobulin domain</keyword>
<keyword id="KW-0449">Lipoprotein</keyword>
<keyword id="KW-0472">Membrane</keyword>
<keyword id="KW-0564">Palmitate</keyword>
<keyword id="KW-0597">Phosphoprotein</keyword>
<keyword id="KW-0675">Receptor</keyword>
<keyword id="KW-1185">Reference proteome</keyword>
<keyword id="KW-0677">Repeat</keyword>
<keyword id="KW-0732">Signal</keyword>
<keyword id="KW-0796">Tight junction</keyword>
<keyword id="KW-0812">Transmembrane</keyword>
<keyword id="KW-1133">Transmembrane helix</keyword>
<gene>
    <name type="primary">CXADR</name>
    <name type="synonym">CAR</name>
</gene>
<reference key="1">
    <citation type="journal article" date="2001" name="Biochem. Biophys. Res. Commun.">
        <title>Characterization of a cDNA encoding the bovine coxsackie and adenovirus receptor.</title>
        <authorList>
            <person name="Thoelen I."/>
            <person name="Keyaerts E."/>
            <person name="Lindberg M."/>
            <person name="Van Ranst M."/>
        </authorList>
    </citation>
    <scope>NUCLEOTIDE SEQUENCE [MRNA]</scope>
    <source>
        <tissue>Liver</tissue>
    </source>
</reference>
<reference key="2">
    <citation type="submission" date="2005-08" db="EMBL/GenBank/DDBJ databases">
        <authorList>
            <consortium name="NIH - Mammalian Gene Collection (MGC) project"/>
        </authorList>
    </citation>
    <scope>NUCLEOTIDE SEQUENCE [LARGE SCALE MRNA]</scope>
    <source>
        <strain>Crossbred X Angus</strain>
        <tissue>Ileum</tissue>
    </source>
</reference>
<proteinExistence type="evidence at transcript level"/>
<dbReference type="EMBL" id="AY033651">
    <property type="protein sequence ID" value="AAK57804.1"/>
    <property type="molecule type" value="mRNA"/>
</dbReference>
<dbReference type="EMBL" id="BC102845">
    <property type="protein sequence ID" value="AAI02846.1"/>
    <property type="molecule type" value="mRNA"/>
</dbReference>
<dbReference type="PIR" id="JC7780">
    <property type="entry name" value="JC7780"/>
</dbReference>
<dbReference type="RefSeq" id="NP_776723.1">
    <property type="nucleotide sequence ID" value="NM_174298.4"/>
</dbReference>
<dbReference type="SMR" id="Q8WMV3"/>
<dbReference type="FunCoup" id="Q8WMV3">
    <property type="interactions" value="872"/>
</dbReference>
<dbReference type="STRING" id="9913.ENSBTAP00000057482"/>
<dbReference type="GlyCosmos" id="Q8WMV3">
    <property type="glycosylation" value="1 site, No reported glycans"/>
</dbReference>
<dbReference type="GlyGen" id="Q8WMV3">
    <property type="glycosylation" value="1 site"/>
</dbReference>
<dbReference type="SwissPalm" id="Q8WMV3"/>
<dbReference type="PaxDb" id="9913-ENSBTAP00000006400"/>
<dbReference type="GeneID" id="281733"/>
<dbReference type="KEGG" id="bta:281733"/>
<dbReference type="CTD" id="1525"/>
<dbReference type="VEuPathDB" id="HostDB:ENSBTAG00000004869"/>
<dbReference type="eggNOG" id="ENOG502QSG0">
    <property type="taxonomic scope" value="Eukaryota"/>
</dbReference>
<dbReference type="HOGENOM" id="CLU_040549_0_0_1"/>
<dbReference type="InParanoid" id="Q8WMV3"/>
<dbReference type="OMA" id="GTKPMQY"/>
<dbReference type="OrthoDB" id="8902063at2759"/>
<dbReference type="TreeFam" id="TF330875"/>
<dbReference type="Reactome" id="R-BTA-198933">
    <property type="pathway name" value="Immunoregulatory interactions between a Lymphoid and a non-Lymphoid cell"/>
</dbReference>
<dbReference type="Reactome" id="R-BTA-202733">
    <property type="pathway name" value="Cell surface interactions at the vascular wall"/>
</dbReference>
<dbReference type="Proteomes" id="UP000009136">
    <property type="component" value="Chromosome 1"/>
</dbReference>
<dbReference type="Bgee" id="ENSBTAG00000004869">
    <property type="expression patterns" value="Expressed in conceptus and 101 other cell types or tissues"/>
</dbReference>
<dbReference type="GO" id="GO:0001669">
    <property type="term" value="C:acrosomal vesicle"/>
    <property type="evidence" value="ECO:0000250"/>
    <property type="project" value="UniProtKB"/>
</dbReference>
<dbReference type="GO" id="GO:0005912">
    <property type="term" value="C:adherens junction"/>
    <property type="evidence" value="ECO:0000250"/>
    <property type="project" value="UniProtKB"/>
</dbReference>
<dbReference type="GO" id="GO:0016327">
    <property type="term" value="C:apicolateral plasma membrane"/>
    <property type="evidence" value="ECO:0000250"/>
    <property type="project" value="UniProtKB"/>
</dbReference>
<dbReference type="GO" id="GO:0016323">
    <property type="term" value="C:basolateral plasma membrane"/>
    <property type="evidence" value="ECO:0000318"/>
    <property type="project" value="GO_Central"/>
</dbReference>
<dbReference type="GO" id="GO:0005923">
    <property type="term" value="C:bicellular tight junction"/>
    <property type="evidence" value="ECO:0000318"/>
    <property type="project" value="GO_Central"/>
</dbReference>
<dbReference type="GO" id="GO:0044297">
    <property type="term" value="C:cell body"/>
    <property type="evidence" value="ECO:0000250"/>
    <property type="project" value="UniProtKB"/>
</dbReference>
<dbReference type="GO" id="GO:0005737">
    <property type="term" value="C:cytoplasm"/>
    <property type="evidence" value="ECO:0000250"/>
    <property type="project" value="UniProtKB"/>
</dbReference>
<dbReference type="GO" id="GO:0030175">
    <property type="term" value="C:filopodium"/>
    <property type="evidence" value="ECO:0000250"/>
    <property type="project" value="UniProtKB"/>
</dbReference>
<dbReference type="GO" id="GO:0030426">
    <property type="term" value="C:growth cone"/>
    <property type="evidence" value="ECO:0000250"/>
    <property type="project" value="UniProtKB"/>
</dbReference>
<dbReference type="GO" id="GO:0014704">
    <property type="term" value="C:intercalated disc"/>
    <property type="evidence" value="ECO:0000318"/>
    <property type="project" value="GO_Central"/>
</dbReference>
<dbReference type="GO" id="GO:0045121">
    <property type="term" value="C:membrane raft"/>
    <property type="evidence" value="ECO:0000250"/>
    <property type="project" value="UniProtKB"/>
</dbReference>
<dbReference type="GO" id="GO:0043005">
    <property type="term" value="C:neuron projection"/>
    <property type="evidence" value="ECO:0000250"/>
    <property type="project" value="UniProtKB"/>
</dbReference>
<dbReference type="GO" id="GO:0005634">
    <property type="term" value="C:nucleus"/>
    <property type="evidence" value="ECO:0000250"/>
    <property type="project" value="UniProtKB"/>
</dbReference>
<dbReference type="GO" id="GO:0005886">
    <property type="term" value="C:plasma membrane"/>
    <property type="evidence" value="ECO:0000250"/>
    <property type="project" value="UniProtKB"/>
</dbReference>
<dbReference type="GO" id="GO:0008013">
    <property type="term" value="F:beta-catenin binding"/>
    <property type="evidence" value="ECO:0000250"/>
    <property type="project" value="UniProtKB"/>
</dbReference>
<dbReference type="GO" id="GO:0050839">
    <property type="term" value="F:cell adhesion molecule binding"/>
    <property type="evidence" value="ECO:0000250"/>
    <property type="project" value="UniProtKB"/>
</dbReference>
<dbReference type="GO" id="GO:0071253">
    <property type="term" value="F:connexin binding"/>
    <property type="evidence" value="ECO:0000250"/>
    <property type="project" value="UniProtKB"/>
</dbReference>
<dbReference type="GO" id="GO:0030165">
    <property type="term" value="F:PDZ domain binding"/>
    <property type="evidence" value="ECO:0000250"/>
    <property type="project" value="UniProtKB"/>
</dbReference>
<dbReference type="GO" id="GO:0030036">
    <property type="term" value="P:actin cytoskeleton organization"/>
    <property type="evidence" value="ECO:0000250"/>
    <property type="project" value="UniProtKB"/>
</dbReference>
<dbReference type="GO" id="GO:0086067">
    <property type="term" value="P:AV node cell to bundle of His cell communication"/>
    <property type="evidence" value="ECO:0000250"/>
    <property type="project" value="UniProtKB"/>
</dbReference>
<dbReference type="GO" id="GO:0055013">
    <property type="term" value="P:cardiac muscle cell development"/>
    <property type="evidence" value="ECO:0000250"/>
    <property type="project" value="UniProtKB"/>
</dbReference>
<dbReference type="GO" id="GO:0045216">
    <property type="term" value="P:cell-cell junction organization"/>
    <property type="evidence" value="ECO:0000250"/>
    <property type="project" value="UniProtKB"/>
</dbReference>
<dbReference type="GO" id="GO:0010669">
    <property type="term" value="P:epithelial structure maintenance"/>
    <property type="evidence" value="ECO:0000250"/>
    <property type="project" value="UniProtKB"/>
</dbReference>
<dbReference type="GO" id="GO:0046629">
    <property type="term" value="P:gamma-delta T cell activation"/>
    <property type="evidence" value="ECO:0000250"/>
    <property type="project" value="UniProtKB"/>
</dbReference>
<dbReference type="GO" id="GO:0008354">
    <property type="term" value="P:germ cell migration"/>
    <property type="evidence" value="ECO:0000250"/>
    <property type="project" value="UniProtKB"/>
</dbReference>
<dbReference type="GO" id="GO:0007507">
    <property type="term" value="P:heart development"/>
    <property type="evidence" value="ECO:0000250"/>
    <property type="project" value="UniProtKB"/>
</dbReference>
<dbReference type="GO" id="GO:0007157">
    <property type="term" value="P:heterophilic cell-cell adhesion via plasma membrane cell adhesion molecules"/>
    <property type="evidence" value="ECO:0000250"/>
    <property type="project" value="UniProtKB"/>
</dbReference>
<dbReference type="GO" id="GO:0034109">
    <property type="term" value="P:homotypic cell-cell adhesion"/>
    <property type="evidence" value="ECO:0000250"/>
    <property type="project" value="UniProtKB"/>
</dbReference>
<dbReference type="GO" id="GO:0007005">
    <property type="term" value="P:mitochondrion organization"/>
    <property type="evidence" value="ECO:0000250"/>
    <property type="project" value="UniProtKB"/>
</dbReference>
<dbReference type="GO" id="GO:0030593">
    <property type="term" value="P:neutrophil chemotaxis"/>
    <property type="evidence" value="ECO:0000250"/>
    <property type="project" value="UniProtKB"/>
</dbReference>
<dbReference type="CDD" id="cd00096">
    <property type="entry name" value="Ig"/>
    <property type="match status" value="1"/>
</dbReference>
<dbReference type="CDD" id="cd20960">
    <property type="entry name" value="IgV_CAR_like"/>
    <property type="match status" value="1"/>
</dbReference>
<dbReference type="FunFam" id="2.60.40.10:FF:000493">
    <property type="entry name" value="Coxsackievirus and adenovirus receptor homolog"/>
    <property type="match status" value="1"/>
</dbReference>
<dbReference type="FunFam" id="2.60.40.10:FF:000095">
    <property type="entry name" value="immunoglobulin superfamily member 11 isoform X1"/>
    <property type="match status" value="1"/>
</dbReference>
<dbReference type="Gene3D" id="2.60.40.10">
    <property type="entry name" value="Immunoglobulins"/>
    <property type="match status" value="2"/>
</dbReference>
<dbReference type="InterPro" id="IPR052307">
    <property type="entry name" value="EJ_Adhesion_Regulator"/>
</dbReference>
<dbReference type="InterPro" id="IPR007110">
    <property type="entry name" value="Ig-like_dom"/>
</dbReference>
<dbReference type="InterPro" id="IPR036179">
    <property type="entry name" value="Ig-like_dom_sf"/>
</dbReference>
<dbReference type="InterPro" id="IPR013783">
    <property type="entry name" value="Ig-like_fold"/>
</dbReference>
<dbReference type="InterPro" id="IPR003599">
    <property type="entry name" value="Ig_sub"/>
</dbReference>
<dbReference type="InterPro" id="IPR003598">
    <property type="entry name" value="Ig_sub2"/>
</dbReference>
<dbReference type="InterPro" id="IPR013106">
    <property type="entry name" value="Ig_V-set"/>
</dbReference>
<dbReference type="PANTHER" id="PTHR44468:SF3">
    <property type="entry name" value="COXSACKIEVIRUS AND ADENOVIRUS RECEPTOR"/>
    <property type="match status" value="1"/>
</dbReference>
<dbReference type="PANTHER" id="PTHR44468">
    <property type="entry name" value="COXSACKIEVIRUS AND ADENOVIRUS RECEPTOR-RELATED"/>
    <property type="match status" value="1"/>
</dbReference>
<dbReference type="Pfam" id="PF13927">
    <property type="entry name" value="Ig_3"/>
    <property type="match status" value="1"/>
</dbReference>
<dbReference type="Pfam" id="PF07686">
    <property type="entry name" value="V-set"/>
    <property type="match status" value="1"/>
</dbReference>
<dbReference type="SMART" id="SM00409">
    <property type="entry name" value="IG"/>
    <property type="match status" value="2"/>
</dbReference>
<dbReference type="SMART" id="SM00408">
    <property type="entry name" value="IGc2"/>
    <property type="match status" value="2"/>
</dbReference>
<dbReference type="SMART" id="SM00406">
    <property type="entry name" value="IGv"/>
    <property type="match status" value="1"/>
</dbReference>
<dbReference type="SUPFAM" id="SSF48726">
    <property type="entry name" value="Immunoglobulin"/>
    <property type="match status" value="2"/>
</dbReference>
<dbReference type="PROSITE" id="PS50835">
    <property type="entry name" value="IG_LIKE"/>
    <property type="match status" value="2"/>
</dbReference>
<feature type="signal peptide" evidence="4">
    <location>
        <begin position="1"/>
        <end position="19"/>
    </location>
</feature>
<feature type="chain" id="PRO_0000014738" description="Coxsackievirus and adenovirus receptor homolog">
    <location>
        <begin position="20"/>
        <end position="365"/>
    </location>
</feature>
<feature type="topological domain" description="Extracellular" evidence="4">
    <location>
        <begin position="20"/>
        <end position="238"/>
    </location>
</feature>
<feature type="transmembrane region" description="Helical" evidence="4">
    <location>
        <begin position="239"/>
        <end position="259"/>
    </location>
</feature>
<feature type="topological domain" description="Cytoplasmic" evidence="4">
    <location>
        <begin position="260"/>
        <end position="365"/>
    </location>
</feature>
<feature type="domain" description="Ig-like C2-type 1">
    <location>
        <begin position="20"/>
        <end position="136"/>
    </location>
</feature>
<feature type="domain" description="Ig-like C2-type 2">
    <location>
        <begin position="141"/>
        <end position="228"/>
    </location>
</feature>
<feature type="region of interest" description="Disordered" evidence="6">
    <location>
        <begin position="269"/>
        <end position="343"/>
    </location>
</feature>
<feature type="short sequence motif" description="PDZ-binding" evidence="1">
    <location>
        <begin position="360"/>
        <end position="365"/>
    </location>
</feature>
<feature type="compositionally biased region" description="Basic and acidic residues" evidence="6">
    <location>
        <begin position="269"/>
        <end position="282"/>
    </location>
</feature>
<feature type="compositionally biased region" description="Polar residues" evidence="6">
    <location>
        <begin position="286"/>
        <end position="322"/>
    </location>
</feature>
<feature type="modified residue" description="Phosphoserine" evidence="3">
    <location>
        <position position="297"/>
    </location>
</feature>
<feature type="modified residue" description="Phosphoserine" evidence="3">
    <location>
        <position position="304"/>
    </location>
</feature>
<feature type="modified residue" description="Phosphoserine" evidence="2">
    <location>
        <position position="306"/>
    </location>
</feature>
<feature type="modified residue" description="Phosphoserine" evidence="2">
    <location>
        <position position="323"/>
    </location>
</feature>
<feature type="modified residue" description="Phosphoserine" evidence="2">
    <location>
        <position position="332"/>
    </location>
</feature>
<feature type="modified residue" description="Phosphoserine" evidence="3">
    <location>
        <position position="363"/>
    </location>
</feature>
<feature type="lipid moiety-binding region" description="S-palmitoyl cysteine" evidence="1">
    <location>
        <position position="259"/>
    </location>
</feature>
<feature type="lipid moiety-binding region" description="S-palmitoyl cysteine" evidence="1">
    <location>
        <position position="260"/>
    </location>
</feature>
<feature type="glycosylation site" description="N-linked (GlcNAc...) asparagine" evidence="4">
    <location>
        <position position="106"/>
    </location>
</feature>
<feature type="disulfide bond" evidence="5">
    <location>
        <begin position="41"/>
        <end position="120"/>
    </location>
</feature>
<feature type="disulfide bond" evidence="5">
    <location>
        <begin position="146"/>
        <end position="223"/>
    </location>
</feature>
<feature type="disulfide bond" evidence="5">
    <location>
        <begin position="162"/>
        <end position="212"/>
    </location>
</feature>
<sequence>MELLLRFLLLCGVADFTRGLSITTPEQMIEKAKGETAYLPCKFTLGPEDQGPLDIEWLLSPADNQKVDQVIILYSGDKIYDDYYQDLKGRVHFTSNDLKSGDASINVTNLQLSDIGTYQCKVKKAPGVGNKKIQLTVLVKPSGIRCYVDGSEEIGNDFKLKCEPKEGSLPLRYEWQKLSDSQKLPTSWLPEMTSPVISVKNASAEYSGTYTCTVRNRVGSDQCLLRLDVVPPSNRAGTIAGAVIGTLLALVLIALIVFCCHKKRREEKYEKEVHHDIREDVPPPKSRTSTARSYIGSNHSSLGSMSPSNMEGYSKTQYNQVPSEDLERAPQSPTLPPAKVAAPNLSRMGAVPVMIPAQSKDGSIV</sequence>
<organism>
    <name type="scientific">Bos taurus</name>
    <name type="common">Bovine</name>
    <dbReference type="NCBI Taxonomy" id="9913"/>
    <lineage>
        <taxon>Eukaryota</taxon>
        <taxon>Metazoa</taxon>
        <taxon>Chordata</taxon>
        <taxon>Craniata</taxon>
        <taxon>Vertebrata</taxon>
        <taxon>Euteleostomi</taxon>
        <taxon>Mammalia</taxon>
        <taxon>Eutheria</taxon>
        <taxon>Laurasiatheria</taxon>
        <taxon>Artiodactyla</taxon>
        <taxon>Ruminantia</taxon>
        <taxon>Pecora</taxon>
        <taxon>Bovidae</taxon>
        <taxon>Bovinae</taxon>
        <taxon>Bos</taxon>
    </lineage>
</organism>
<protein>
    <recommendedName>
        <fullName>Coxsackievirus and adenovirus receptor homolog</fullName>
        <shortName>Coxsackie virus and adenovirus receptor</shortName>
    </recommendedName>
    <alternativeName>
        <fullName>BCAR</fullName>
    </alternativeName>
</protein>
<name>CXAR_BOVIN</name>
<comment type="function">
    <text evidence="1">Component of the epithelial apical junction complex that may function as a homophilic cell adhesion molecule and is essential for tight junction integrity. Also involved in transepithelial migration of leukocytes through adhesive interactions with JAML a transmembrane protein of the plasma membrane of leukocytes. The interaction between both receptors also mediates the activation of gamma-delta T-cells, a subpopulation of T-cells residing in epithelia and involved in tissue homeostasis and repair. Upon epithelial CXADR-binding, JAML induces downstream cell signaling events in gamma-delta T-cells through PI3-kinase and MAP kinases. It results in proliferation and production of cytokines and growth factors by T-cells that in turn stimulate epithelial tissues repair (By similarity).</text>
</comment>
<comment type="subunit">
    <text evidence="1">Monomer. May form homodimers. Interacts with LNX, MAGI1, DLG4, PRKCABP, TJP1 and CTNNB1. Interacts with MPDZ; recruits MPDZ to intercellular contact sites. Interacts with JAML (homodimeric form) (By similarity).</text>
</comment>
<comment type="subcellular location">
    <subcellularLocation>
        <location evidence="2">Cell membrane</location>
        <topology evidence="4">Single-pass type I membrane protein</topology>
    </subcellularLocation>
    <subcellularLocation>
        <location evidence="2">Basolateral cell membrane</location>
        <topology evidence="4">Single-pass type I membrane protein</topology>
    </subcellularLocation>
    <subcellularLocation>
        <location evidence="2">Cell junction</location>
        <location evidence="2">Tight junction</location>
    </subcellularLocation>
    <subcellularLocation>
        <location evidence="2">Cell junction</location>
        <location evidence="2">Adherens junction</location>
    </subcellularLocation>
    <text evidence="2">In epithelial cells localizes to the apical junction complex composed of tight and adherens junctions. In airway epithelial cells localized to basolateral membrane but not to apical surface.</text>
</comment>
<comment type="domain">
    <text evidence="1">The Ig-like C2-type 1 domain mediates homodimerization and interaction with JAML.</text>
</comment>
<comment type="domain">
    <text evidence="1">The PDZ-binding motif mediates interaction with MPDZ and MAGI1.</text>
</comment>
<comment type="PTM">
    <text evidence="1">N-glycosylated.</text>
</comment>
<comment type="PTM">
    <text evidence="1">Palmitoylated on Cys-259 and/or Cys-260; required for proper localization to the plasma membrane.</text>
</comment>
<accession>Q8WMV3</accession>
<accession>Q3SZH9</accession>